<feature type="chain" id="PRO_1000043735" description="GTP cyclohydrolase 1">
    <location>
        <begin position="1"/>
        <end position="216"/>
    </location>
</feature>
<feature type="binding site" evidence="2">
    <location>
        <position position="108"/>
    </location>
    <ligand>
        <name>Zn(2+)</name>
        <dbReference type="ChEBI" id="CHEBI:29105"/>
    </ligand>
</feature>
<feature type="binding site" evidence="2">
    <location>
        <position position="111"/>
    </location>
    <ligand>
        <name>Zn(2+)</name>
        <dbReference type="ChEBI" id="CHEBI:29105"/>
    </ligand>
</feature>
<feature type="binding site" evidence="2">
    <location>
        <position position="179"/>
    </location>
    <ligand>
        <name>Zn(2+)</name>
        <dbReference type="ChEBI" id="CHEBI:29105"/>
    </ligand>
</feature>
<dbReference type="EC" id="3.5.4.16" evidence="2"/>
<dbReference type="EMBL" id="CP000446">
    <property type="protein sequence ID" value="ABI40666.1"/>
    <property type="molecule type" value="Genomic_DNA"/>
</dbReference>
<dbReference type="RefSeq" id="WP_011624327.1">
    <property type="nucleotide sequence ID" value="NC_008321.1"/>
</dbReference>
<dbReference type="SMR" id="Q0HE51"/>
<dbReference type="GeneID" id="94729706"/>
<dbReference type="KEGG" id="she:Shewmr4_3602"/>
<dbReference type="HOGENOM" id="CLU_049768_3_2_6"/>
<dbReference type="UniPathway" id="UPA00848">
    <property type="reaction ID" value="UER00151"/>
</dbReference>
<dbReference type="GO" id="GO:0005737">
    <property type="term" value="C:cytoplasm"/>
    <property type="evidence" value="ECO:0007669"/>
    <property type="project" value="TreeGrafter"/>
</dbReference>
<dbReference type="GO" id="GO:0005525">
    <property type="term" value="F:GTP binding"/>
    <property type="evidence" value="ECO:0007669"/>
    <property type="project" value="UniProtKB-KW"/>
</dbReference>
<dbReference type="GO" id="GO:0003934">
    <property type="term" value="F:GTP cyclohydrolase I activity"/>
    <property type="evidence" value="ECO:0007669"/>
    <property type="project" value="UniProtKB-UniRule"/>
</dbReference>
<dbReference type="GO" id="GO:0008270">
    <property type="term" value="F:zinc ion binding"/>
    <property type="evidence" value="ECO:0007669"/>
    <property type="project" value="UniProtKB-UniRule"/>
</dbReference>
<dbReference type="GO" id="GO:0006730">
    <property type="term" value="P:one-carbon metabolic process"/>
    <property type="evidence" value="ECO:0007669"/>
    <property type="project" value="UniProtKB-UniRule"/>
</dbReference>
<dbReference type="GO" id="GO:0006729">
    <property type="term" value="P:tetrahydrobiopterin biosynthetic process"/>
    <property type="evidence" value="ECO:0007669"/>
    <property type="project" value="TreeGrafter"/>
</dbReference>
<dbReference type="GO" id="GO:0046654">
    <property type="term" value="P:tetrahydrofolate biosynthetic process"/>
    <property type="evidence" value="ECO:0007669"/>
    <property type="project" value="UniProtKB-UniRule"/>
</dbReference>
<dbReference type="FunFam" id="3.30.1130.10:FF:000001">
    <property type="entry name" value="GTP cyclohydrolase 1"/>
    <property type="match status" value="1"/>
</dbReference>
<dbReference type="Gene3D" id="1.10.286.10">
    <property type="match status" value="1"/>
</dbReference>
<dbReference type="Gene3D" id="3.30.1130.10">
    <property type="match status" value="1"/>
</dbReference>
<dbReference type="HAMAP" id="MF_00223">
    <property type="entry name" value="FolE"/>
    <property type="match status" value="1"/>
</dbReference>
<dbReference type="InterPro" id="IPR043133">
    <property type="entry name" value="GTP-CH-I_C/QueF"/>
</dbReference>
<dbReference type="InterPro" id="IPR043134">
    <property type="entry name" value="GTP-CH-I_N"/>
</dbReference>
<dbReference type="InterPro" id="IPR001474">
    <property type="entry name" value="GTP_CycHdrlase_I"/>
</dbReference>
<dbReference type="InterPro" id="IPR018234">
    <property type="entry name" value="GTP_CycHdrlase_I_CS"/>
</dbReference>
<dbReference type="InterPro" id="IPR020602">
    <property type="entry name" value="GTP_CycHdrlase_I_dom"/>
</dbReference>
<dbReference type="NCBIfam" id="TIGR00063">
    <property type="entry name" value="folE"/>
    <property type="match status" value="1"/>
</dbReference>
<dbReference type="NCBIfam" id="NF006824">
    <property type="entry name" value="PRK09347.1-1"/>
    <property type="match status" value="1"/>
</dbReference>
<dbReference type="NCBIfam" id="NF006826">
    <property type="entry name" value="PRK09347.1-3"/>
    <property type="match status" value="1"/>
</dbReference>
<dbReference type="PANTHER" id="PTHR11109:SF7">
    <property type="entry name" value="GTP CYCLOHYDROLASE 1"/>
    <property type="match status" value="1"/>
</dbReference>
<dbReference type="PANTHER" id="PTHR11109">
    <property type="entry name" value="GTP CYCLOHYDROLASE I"/>
    <property type="match status" value="1"/>
</dbReference>
<dbReference type="Pfam" id="PF01227">
    <property type="entry name" value="GTP_cyclohydroI"/>
    <property type="match status" value="1"/>
</dbReference>
<dbReference type="SUPFAM" id="SSF55620">
    <property type="entry name" value="Tetrahydrobiopterin biosynthesis enzymes-like"/>
    <property type="match status" value="1"/>
</dbReference>
<dbReference type="PROSITE" id="PS00859">
    <property type="entry name" value="GTP_CYCLOHYDROL_1_1"/>
    <property type="match status" value="1"/>
</dbReference>
<dbReference type="PROSITE" id="PS00860">
    <property type="entry name" value="GTP_CYCLOHYDROL_1_2"/>
    <property type="match status" value="1"/>
</dbReference>
<protein>
    <recommendedName>
        <fullName evidence="2">GTP cyclohydrolase 1</fullName>
        <ecNumber evidence="2">3.5.4.16</ecNumber>
    </recommendedName>
    <alternativeName>
        <fullName evidence="2">GTP cyclohydrolase I</fullName>
        <shortName evidence="2">GTP-CH-I</shortName>
    </alternativeName>
</protein>
<keyword id="KW-0342">GTP-binding</keyword>
<keyword id="KW-0378">Hydrolase</keyword>
<keyword id="KW-0479">Metal-binding</keyword>
<keyword id="KW-0547">Nucleotide-binding</keyword>
<keyword id="KW-0554">One-carbon metabolism</keyword>
<keyword id="KW-0862">Zinc</keyword>
<sequence length="216" mass="24285">MALSEAAVKVQAALQERGLETPMLPNVFTPEERKDKIEFHMKEILTLMSLDLSDDSLADTPRRIAKMYVDEIFSGLDYENFPKITVIDNKMGFDEMVRVQDISLTSTCEHHLVTIDGTATIAYIPRKKIIGLSKINRIVRFFSQRPQVQERLTQQVLVALQTLLETKDVAVKMDAVHYCVKSRGVMDSTSSTTTTALGGIFKSNPATRAEFLNQSK</sequence>
<organism>
    <name type="scientific">Shewanella sp. (strain MR-4)</name>
    <dbReference type="NCBI Taxonomy" id="60480"/>
    <lineage>
        <taxon>Bacteria</taxon>
        <taxon>Pseudomonadati</taxon>
        <taxon>Pseudomonadota</taxon>
        <taxon>Gammaproteobacteria</taxon>
        <taxon>Alteromonadales</taxon>
        <taxon>Shewanellaceae</taxon>
        <taxon>Shewanella</taxon>
    </lineage>
</organism>
<name>GCH1_SHESM</name>
<accession>Q0HE51</accession>
<proteinExistence type="inferred from homology"/>
<evidence type="ECO:0000250" key="1"/>
<evidence type="ECO:0000255" key="2">
    <source>
        <dbReference type="HAMAP-Rule" id="MF_00223"/>
    </source>
</evidence>
<reference key="1">
    <citation type="submission" date="2006-08" db="EMBL/GenBank/DDBJ databases">
        <title>Complete sequence of Shewanella sp. MR-4.</title>
        <authorList>
            <consortium name="US DOE Joint Genome Institute"/>
            <person name="Copeland A."/>
            <person name="Lucas S."/>
            <person name="Lapidus A."/>
            <person name="Barry K."/>
            <person name="Detter J.C."/>
            <person name="Glavina del Rio T."/>
            <person name="Hammon N."/>
            <person name="Israni S."/>
            <person name="Dalin E."/>
            <person name="Tice H."/>
            <person name="Pitluck S."/>
            <person name="Kiss H."/>
            <person name="Brettin T."/>
            <person name="Bruce D."/>
            <person name="Han C."/>
            <person name="Tapia R."/>
            <person name="Gilna P."/>
            <person name="Schmutz J."/>
            <person name="Larimer F."/>
            <person name="Land M."/>
            <person name="Hauser L."/>
            <person name="Kyrpides N."/>
            <person name="Mikhailova N."/>
            <person name="Nealson K."/>
            <person name="Konstantinidis K."/>
            <person name="Klappenbach J."/>
            <person name="Tiedje J."/>
            <person name="Richardson P."/>
        </authorList>
    </citation>
    <scope>NUCLEOTIDE SEQUENCE [LARGE SCALE GENOMIC DNA]</scope>
    <source>
        <strain>MR-4</strain>
    </source>
</reference>
<gene>
    <name evidence="2" type="primary">folE</name>
    <name type="ordered locus">Shewmr4_3602</name>
</gene>
<comment type="catalytic activity">
    <reaction evidence="2">
        <text>GTP + H2O = 7,8-dihydroneopterin 3'-triphosphate + formate + H(+)</text>
        <dbReference type="Rhea" id="RHEA:17473"/>
        <dbReference type="ChEBI" id="CHEBI:15377"/>
        <dbReference type="ChEBI" id="CHEBI:15378"/>
        <dbReference type="ChEBI" id="CHEBI:15740"/>
        <dbReference type="ChEBI" id="CHEBI:37565"/>
        <dbReference type="ChEBI" id="CHEBI:58462"/>
        <dbReference type="EC" id="3.5.4.16"/>
    </reaction>
</comment>
<comment type="pathway">
    <text evidence="2">Cofactor biosynthesis; 7,8-dihydroneopterin triphosphate biosynthesis; 7,8-dihydroneopterin triphosphate from GTP: step 1/1.</text>
</comment>
<comment type="subunit">
    <text evidence="1">Toroid-shaped homodecamer, composed of two pentamers of five dimers.</text>
</comment>
<comment type="similarity">
    <text evidence="2">Belongs to the GTP cyclohydrolase I family.</text>
</comment>